<evidence type="ECO:0000255" key="1">
    <source>
        <dbReference type="HAMAP-Rule" id="MF_00159"/>
    </source>
</evidence>
<keyword id="KW-0004">4Fe-4S</keyword>
<keyword id="KW-0408">Iron</keyword>
<keyword id="KW-0411">Iron-sulfur</keyword>
<keyword id="KW-0414">Isoprene biosynthesis</keyword>
<keyword id="KW-0479">Metal-binding</keyword>
<keyword id="KW-0560">Oxidoreductase</keyword>
<reference key="1">
    <citation type="journal article" date="2009" name="PLoS Genet.">
        <title>Organised genome dynamics in the Escherichia coli species results in highly diverse adaptive paths.</title>
        <authorList>
            <person name="Touchon M."/>
            <person name="Hoede C."/>
            <person name="Tenaillon O."/>
            <person name="Barbe V."/>
            <person name="Baeriswyl S."/>
            <person name="Bidet P."/>
            <person name="Bingen E."/>
            <person name="Bonacorsi S."/>
            <person name="Bouchier C."/>
            <person name="Bouvet O."/>
            <person name="Calteau A."/>
            <person name="Chiapello H."/>
            <person name="Clermont O."/>
            <person name="Cruveiller S."/>
            <person name="Danchin A."/>
            <person name="Diard M."/>
            <person name="Dossat C."/>
            <person name="Karoui M.E."/>
            <person name="Frapy E."/>
            <person name="Garry L."/>
            <person name="Ghigo J.M."/>
            <person name="Gilles A.M."/>
            <person name="Johnson J."/>
            <person name="Le Bouguenec C."/>
            <person name="Lescat M."/>
            <person name="Mangenot S."/>
            <person name="Martinez-Jehanne V."/>
            <person name="Matic I."/>
            <person name="Nassif X."/>
            <person name="Oztas S."/>
            <person name="Petit M.A."/>
            <person name="Pichon C."/>
            <person name="Rouy Z."/>
            <person name="Ruf C.S."/>
            <person name="Schneider D."/>
            <person name="Tourret J."/>
            <person name="Vacherie B."/>
            <person name="Vallenet D."/>
            <person name="Medigue C."/>
            <person name="Rocha E.P.C."/>
            <person name="Denamur E."/>
        </authorList>
    </citation>
    <scope>NUCLEOTIDE SEQUENCE [LARGE SCALE GENOMIC DNA]</scope>
    <source>
        <strain>IAI1</strain>
    </source>
</reference>
<name>ISPG_ECO8A</name>
<organism>
    <name type="scientific">Escherichia coli O8 (strain IAI1)</name>
    <dbReference type="NCBI Taxonomy" id="585034"/>
    <lineage>
        <taxon>Bacteria</taxon>
        <taxon>Pseudomonadati</taxon>
        <taxon>Pseudomonadota</taxon>
        <taxon>Gammaproteobacteria</taxon>
        <taxon>Enterobacterales</taxon>
        <taxon>Enterobacteriaceae</taxon>
        <taxon>Escherichia</taxon>
    </lineage>
</organism>
<comment type="function">
    <text evidence="1">Converts 2C-methyl-D-erythritol 2,4-cyclodiphosphate (ME-2,4cPP) into 1-hydroxy-2-methyl-2-(E)-butenyl 4-diphosphate.</text>
</comment>
<comment type="catalytic activity">
    <reaction evidence="1">
        <text>(2E)-4-hydroxy-3-methylbut-2-enyl diphosphate + oxidized [flavodoxin] + H2O + 2 H(+) = 2-C-methyl-D-erythritol 2,4-cyclic diphosphate + reduced [flavodoxin]</text>
        <dbReference type="Rhea" id="RHEA:43604"/>
        <dbReference type="Rhea" id="RHEA-COMP:10622"/>
        <dbReference type="Rhea" id="RHEA-COMP:10623"/>
        <dbReference type="ChEBI" id="CHEBI:15377"/>
        <dbReference type="ChEBI" id="CHEBI:15378"/>
        <dbReference type="ChEBI" id="CHEBI:57618"/>
        <dbReference type="ChEBI" id="CHEBI:58210"/>
        <dbReference type="ChEBI" id="CHEBI:58483"/>
        <dbReference type="ChEBI" id="CHEBI:128753"/>
        <dbReference type="EC" id="1.17.7.3"/>
    </reaction>
</comment>
<comment type="cofactor">
    <cofactor evidence="1">
        <name>[4Fe-4S] cluster</name>
        <dbReference type="ChEBI" id="CHEBI:49883"/>
    </cofactor>
    <text evidence="1">Binds 1 [4Fe-4S] cluster.</text>
</comment>
<comment type="pathway">
    <text evidence="1">Isoprenoid biosynthesis; isopentenyl diphosphate biosynthesis via DXP pathway; isopentenyl diphosphate from 1-deoxy-D-xylulose 5-phosphate: step 5/6.</text>
</comment>
<comment type="similarity">
    <text evidence="1">Belongs to the IspG family.</text>
</comment>
<dbReference type="EC" id="1.17.7.3" evidence="1"/>
<dbReference type="EMBL" id="CU928160">
    <property type="protein sequence ID" value="CAQ99407.1"/>
    <property type="molecule type" value="Genomic_DNA"/>
</dbReference>
<dbReference type="RefSeq" id="WP_000551809.1">
    <property type="nucleotide sequence ID" value="NC_011741.1"/>
</dbReference>
<dbReference type="SMR" id="B7M7L9"/>
<dbReference type="KEGG" id="ecr:ECIAI1_2567"/>
<dbReference type="HOGENOM" id="CLU_042258_0_0_6"/>
<dbReference type="UniPathway" id="UPA00056">
    <property type="reaction ID" value="UER00096"/>
</dbReference>
<dbReference type="GO" id="GO:0051539">
    <property type="term" value="F:4 iron, 4 sulfur cluster binding"/>
    <property type="evidence" value="ECO:0007669"/>
    <property type="project" value="UniProtKB-UniRule"/>
</dbReference>
<dbReference type="GO" id="GO:0046429">
    <property type="term" value="F:4-hydroxy-3-methylbut-2-en-1-yl diphosphate synthase activity (ferredoxin)"/>
    <property type="evidence" value="ECO:0007669"/>
    <property type="project" value="UniProtKB-UniRule"/>
</dbReference>
<dbReference type="GO" id="GO:0141197">
    <property type="term" value="F:4-hydroxy-3-methylbut-2-enyl-diphosphate synthase activity (flavodoxin)"/>
    <property type="evidence" value="ECO:0007669"/>
    <property type="project" value="UniProtKB-EC"/>
</dbReference>
<dbReference type="GO" id="GO:0005506">
    <property type="term" value="F:iron ion binding"/>
    <property type="evidence" value="ECO:0007669"/>
    <property type="project" value="InterPro"/>
</dbReference>
<dbReference type="GO" id="GO:0019288">
    <property type="term" value="P:isopentenyl diphosphate biosynthetic process, methylerythritol 4-phosphate pathway"/>
    <property type="evidence" value="ECO:0007669"/>
    <property type="project" value="UniProtKB-UniRule"/>
</dbReference>
<dbReference type="GO" id="GO:0016114">
    <property type="term" value="P:terpenoid biosynthetic process"/>
    <property type="evidence" value="ECO:0007669"/>
    <property type="project" value="InterPro"/>
</dbReference>
<dbReference type="FunFam" id="3.20.20.20:FF:000001">
    <property type="entry name" value="4-hydroxy-3-methylbut-2-en-1-yl diphosphate synthase (flavodoxin)"/>
    <property type="match status" value="1"/>
</dbReference>
<dbReference type="FunFam" id="3.30.413.10:FF:000002">
    <property type="entry name" value="4-hydroxy-3-methylbut-2-en-1-yl diphosphate synthase (flavodoxin)"/>
    <property type="match status" value="1"/>
</dbReference>
<dbReference type="Gene3D" id="3.20.20.20">
    <property type="entry name" value="Dihydropteroate synthase-like"/>
    <property type="match status" value="1"/>
</dbReference>
<dbReference type="Gene3D" id="3.30.413.10">
    <property type="entry name" value="Sulfite Reductase Hemoprotein, domain 1"/>
    <property type="match status" value="1"/>
</dbReference>
<dbReference type="HAMAP" id="MF_00159">
    <property type="entry name" value="IspG"/>
    <property type="match status" value="1"/>
</dbReference>
<dbReference type="InterPro" id="IPR011005">
    <property type="entry name" value="Dihydropteroate_synth-like_sf"/>
</dbReference>
<dbReference type="InterPro" id="IPR016425">
    <property type="entry name" value="IspG_bac"/>
</dbReference>
<dbReference type="InterPro" id="IPR004588">
    <property type="entry name" value="IspG_bac-typ"/>
</dbReference>
<dbReference type="InterPro" id="IPR045854">
    <property type="entry name" value="NO2/SO3_Rdtase_4Fe4S_sf"/>
</dbReference>
<dbReference type="NCBIfam" id="TIGR00612">
    <property type="entry name" value="ispG_gcpE"/>
    <property type="match status" value="1"/>
</dbReference>
<dbReference type="NCBIfam" id="NF001540">
    <property type="entry name" value="PRK00366.1"/>
    <property type="match status" value="1"/>
</dbReference>
<dbReference type="PANTHER" id="PTHR30454">
    <property type="entry name" value="4-HYDROXY-3-METHYLBUT-2-EN-1-YL DIPHOSPHATE SYNTHASE"/>
    <property type="match status" value="1"/>
</dbReference>
<dbReference type="PANTHER" id="PTHR30454:SF0">
    <property type="entry name" value="4-HYDROXY-3-METHYLBUT-2-EN-1-YL DIPHOSPHATE SYNTHASE (FERREDOXIN), CHLOROPLASTIC"/>
    <property type="match status" value="1"/>
</dbReference>
<dbReference type="Pfam" id="PF04551">
    <property type="entry name" value="GcpE"/>
    <property type="match status" value="1"/>
</dbReference>
<dbReference type="PIRSF" id="PIRSF004640">
    <property type="entry name" value="IspG"/>
    <property type="match status" value="1"/>
</dbReference>
<dbReference type="SUPFAM" id="SSF51717">
    <property type="entry name" value="Dihydropteroate synthetase-like"/>
    <property type="match status" value="1"/>
</dbReference>
<dbReference type="SUPFAM" id="SSF56014">
    <property type="entry name" value="Nitrite and sulphite reductase 4Fe-4S domain-like"/>
    <property type="match status" value="1"/>
</dbReference>
<gene>
    <name evidence="1" type="primary">ispG</name>
    <name type="ordered locus">ECIAI1_2567</name>
</gene>
<proteinExistence type="inferred from homology"/>
<sequence>MHNQAPIQRRKSTRIYVGNVPIGDGAPIAVQSMTNTRTTDVEATVNQIKALERVGADIVRVSVPTMDAAEAFKLIKQQVNVPLVADIHFDYRIALKVAEYGVDCLRINPGNIGNEERIRMVVDCARDKNIPIRIGVNAGSLEKDLQEKYGEPTPQALLESAMRHVDHLDRLNFDQFKVSVKASDVFLAVESYRLLAKQIDQPLHLGITEAGGARSGAVKSAIGLGLLLSEGIGDTLRVSLAADPVEEIKVGFDILKSLRIRSRGINFIACPTCSRQEFDVIGTVNALEQRLEDIITSMDVSIIGCVVNGPGEALVSTLGVTGGNKKSGLYEDGVRKDRLDNNDMIDQLEARIRAKASQLDEARRIDVQQVEK</sequence>
<accession>B7M7L9</accession>
<protein>
    <recommendedName>
        <fullName evidence="1">4-hydroxy-3-methylbut-2-en-1-yl diphosphate synthase (flavodoxin)</fullName>
        <ecNumber evidence="1">1.17.7.3</ecNumber>
    </recommendedName>
    <alternativeName>
        <fullName evidence="1">1-hydroxy-2-methyl-2-(E)-butenyl 4-diphosphate synthase</fullName>
    </alternativeName>
</protein>
<feature type="chain" id="PRO_1000191083" description="4-hydroxy-3-methylbut-2-en-1-yl diphosphate synthase (flavodoxin)">
    <location>
        <begin position="1"/>
        <end position="372"/>
    </location>
</feature>
<feature type="binding site" evidence="1">
    <location>
        <position position="270"/>
    </location>
    <ligand>
        <name>[4Fe-4S] cluster</name>
        <dbReference type="ChEBI" id="CHEBI:49883"/>
    </ligand>
</feature>
<feature type="binding site" evidence="1">
    <location>
        <position position="273"/>
    </location>
    <ligand>
        <name>[4Fe-4S] cluster</name>
        <dbReference type="ChEBI" id="CHEBI:49883"/>
    </ligand>
</feature>
<feature type="binding site" evidence="1">
    <location>
        <position position="305"/>
    </location>
    <ligand>
        <name>[4Fe-4S] cluster</name>
        <dbReference type="ChEBI" id="CHEBI:49883"/>
    </ligand>
</feature>
<feature type="binding site" evidence="1">
    <location>
        <position position="312"/>
    </location>
    <ligand>
        <name>[4Fe-4S] cluster</name>
        <dbReference type="ChEBI" id="CHEBI:49883"/>
    </ligand>
</feature>